<reference key="1">
    <citation type="submission" date="2007-02" db="EMBL/GenBank/DDBJ databases">
        <title>Complete sequence of chromosome of Yersinia pestis Pestoides F.</title>
        <authorList>
            <consortium name="US DOE Joint Genome Institute"/>
            <person name="Copeland A."/>
            <person name="Lucas S."/>
            <person name="Lapidus A."/>
            <person name="Barry K."/>
            <person name="Detter J.C."/>
            <person name="Glavina del Rio T."/>
            <person name="Hammon N."/>
            <person name="Israni S."/>
            <person name="Dalin E."/>
            <person name="Tice H."/>
            <person name="Pitluck S."/>
            <person name="Di Bartolo G."/>
            <person name="Chain P."/>
            <person name="Malfatti S."/>
            <person name="Shin M."/>
            <person name="Vergez L."/>
            <person name="Schmutz J."/>
            <person name="Larimer F."/>
            <person name="Land M."/>
            <person name="Hauser L."/>
            <person name="Worsham P."/>
            <person name="Chu M."/>
            <person name="Bearden S."/>
            <person name="Garcia E."/>
            <person name="Richardson P."/>
        </authorList>
    </citation>
    <scope>NUCLEOTIDE SEQUENCE [LARGE SCALE GENOMIC DNA]</scope>
    <source>
        <strain>Pestoides F</strain>
    </source>
</reference>
<protein>
    <recommendedName>
        <fullName evidence="1">UPF0299 membrane protein YPDSF_1460</fullName>
    </recommendedName>
</protein>
<sequence>MRNMMSLCWQYLRAFTIIYLCLWAGKALALLLPIVIPGSIIGMLILFVLLTLQILPSPWVKPSCQLLIRYMALLFVPIGVGVMQYYEQLTKQFGPIVVSCFISTLIVMLVVAYSSHYVHRDRKVISPSTPTEGEK</sequence>
<comment type="subcellular location">
    <subcellularLocation>
        <location evidence="1">Cell inner membrane</location>
        <topology evidence="1">Multi-pass membrane protein</topology>
    </subcellularLocation>
</comment>
<comment type="similarity">
    <text evidence="1">Belongs to the UPF0299 family.</text>
</comment>
<evidence type="ECO:0000255" key="1">
    <source>
        <dbReference type="HAMAP-Rule" id="MF_01144"/>
    </source>
</evidence>
<feature type="chain" id="PRO_1000085046" description="UPF0299 membrane protein YPDSF_1460">
    <location>
        <begin position="1"/>
        <end position="135"/>
    </location>
</feature>
<feature type="transmembrane region" description="Helical" evidence="1">
    <location>
        <begin position="30"/>
        <end position="50"/>
    </location>
</feature>
<feature type="transmembrane region" description="Helical" evidence="1">
    <location>
        <begin position="66"/>
        <end position="86"/>
    </location>
</feature>
<feature type="transmembrane region" description="Helical" evidence="1">
    <location>
        <begin position="93"/>
        <end position="113"/>
    </location>
</feature>
<keyword id="KW-0997">Cell inner membrane</keyword>
<keyword id="KW-1003">Cell membrane</keyword>
<keyword id="KW-0472">Membrane</keyword>
<keyword id="KW-0812">Transmembrane</keyword>
<keyword id="KW-1133">Transmembrane helix</keyword>
<gene>
    <name type="ordered locus">YPDSF_1460</name>
</gene>
<accession>A4TKN5</accession>
<proteinExistence type="inferred from homology"/>
<organism>
    <name type="scientific">Yersinia pestis (strain Pestoides F)</name>
    <dbReference type="NCBI Taxonomy" id="386656"/>
    <lineage>
        <taxon>Bacteria</taxon>
        <taxon>Pseudomonadati</taxon>
        <taxon>Pseudomonadota</taxon>
        <taxon>Gammaproteobacteria</taxon>
        <taxon>Enterobacterales</taxon>
        <taxon>Yersiniaceae</taxon>
        <taxon>Yersinia</taxon>
    </lineage>
</organism>
<name>Y1460_YERPP</name>
<dbReference type="EMBL" id="CP000668">
    <property type="protein sequence ID" value="ABP39847.1"/>
    <property type="molecule type" value="Genomic_DNA"/>
</dbReference>
<dbReference type="RefSeq" id="WP_002211971.1">
    <property type="nucleotide sequence ID" value="NZ_CP009715.1"/>
</dbReference>
<dbReference type="SMR" id="A4TKN5"/>
<dbReference type="KEGG" id="ypp:YPDSF_1460"/>
<dbReference type="PATRIC" id="fig|386656.14.peg.2322"/>
<dbReference type="GO" id="GO:0005886">
    <property type="term" value="C:plasma membrane"/>
    <property type="evidence" value="ECO:0007669"/>
    <property type="project" value="UniProtKB-SubCell"/>
</dbReference>
<dbReference type="HAMAP" id="MF_01144">
    <property type="entry name" value="UPF0299"/>
    <property type="match status" value="1"/>
</dbReference>
<dbReference type="InterPro" id="IPR005538">
    <property type="entry name" value="LrgA/CidA"/>
</dbReference>
<dbReference type="InterPro" id="IPR022957">
    <property type="entry name" value="Uncharacterised_UPF0299"/>
</dbReference>
<dbReference type="NCBIfam" id="NF002494">
    <property type="entry name" value="PRK01821.1"/>
    <property type="match status" value="1"/>
</dbReference>
<dbReference type="PANTHER" id="PTHR33931">
    <property type="entry name" value="HOLIN-LIKE PROTEIN CIDA-RELATED"/>
    <property type="match status" value="1"/>
</dbReference>
<dbReference type="PANTHER" id="PTHR33931:SF5">
    <property type="entry name" value="UPF0299 MEMBRANE PROTEIN YOHJ"/>
    <property type="match status" value="1"/>
</dbReference>
<dbReference type="Pfam" id="PF03788">
    <property type="entry name" value="LrgA"/>
    <property type="match status" value="1"/>
</dbReference>